<feature type="chain" id="PRO_0000145910" description="Phosphoglycerate kinase">
    <location>
        <begin position="1"/>
        <end position="397"/>
    </location>
</feature>
<feature type="binding site" evidence="1">
    <location>
        <begin position="26"/>
        <end position="28"/>
    </location>
    <ligand>
        <name>substrate</name>
    </ligand>
</feature>
<feature type="binding site" evidence="1">
    <location>
        <position position="42"/>
    </location>
    <ligand>
        <name>substrate</name>
    </ligand>
</feature>
<feature type="binding site" evidence="1">
    <location>
        <begin position="65"/>
        <end position="68"/>
    </location>
    <ligand>
        <name>substrate</name>
    </ligand>
</feature>
<feature type="binding site" evidence="1">
    <location>
        <position position="119"/>
    </location>
    <ligand>
        <name>substrate</name>
    </ligand>
</feature>
<feature type="binding site" evidence="1">
    <location>
        <position position="152"/>
    </location>
    <ligand>
        <name>substrate</name>
    </ligand>
</feature>
<feature type="binding site" evidence="1">
    <location>
        <position position="203"/>
    </location>
    <ligand>
        <name>ATP</name>
        <dbReference type="ChEBI" id="CHEBI:30616"/>
    </ligand>
</feature>
<feature type="binding site" evidence="1">
    <location>
        <position position="325"/>
    </location>
    <ligand>
        <name>ATP</name>
        <dbReference type="ChEBI" id="CHEBI:30616"/>
    </ligand>
</feature>
<feature type="binding site" evidence="1">
    <location>
        <begin position="351"/>
        <end position="354"/>
    </location>
    <ligand>
        <name>ATP</name>
        <dbReference type="ChEBI" id="CHEBI:30616"/>
    </ligand>
</feature>
<gene>
    <name evidence="1" type="primary">pgk</name>
    <name type="ordered locus">BB1382</name>
</gene>
<proteinExistence type="inferred from homology"/>
<sequence length="397" mass="40981">MSNVNTLSALAKSGALSGKRVFIRADLNVPFDDAGRISEDTRIRASVPGIRLALDAGAAVMVTSHLGRPKEGALTEADSLAPVAQRLSELLGMQVRLVPDWVDGVSVEPGEVVLLENCRGNVGEKKDDEGLSRKMAALCDVYVNDAFGTAHRAEATTHGIARFAPVACAGPLLEAELEALGRALHDPKRSLVAIVGGSKVSTKLSILQSLADKVDQLVVGGGIANTFMLAAGLPIGKSLAEPEQVEQARAVIEIMKRRGAEVPIPTDVVCAKSFGADAAATVKAAADVAEDDMILDIGPQTAQRLADILKAAGTIVWNGPVGVFEFDQFAHGTEVVARAIADSAGFSIAGGGDTLAAIAKYGIADQTGYISTGGGAFLEFLEGKALPAVAVLQARAA</sequence>
<accession>Q7WMK9</accession>
<keyword id="KW-0067">ATP-binding</keyword>
<keyword id="KW-0963">Cytoplasm</keyword>
<keyword id="KW-0324">Glycolysis</keyword>
<keyword id="KW-0418">Kinase</keyword>
<keyword id="KW-0547">Nucleotide-binding</keyword>
<keyword id="KW-0808">Transferase</keyword>
<dbReference type="EC" id="2.7.2.3" evidence="1"/>
<dbReference type="EMBL" id="BX640441">
    <property type="protein sequence ID" value="CAE31880.1"/>
    <property type="molecule type" value="Genomic_DNA"/>
</dbReference>
<dbReference type="RefSeq" id="WP_010926143.1">
    <property type="nucleotide sequence ID" value="NC_002927.3"/>
</dbReference>
<dbReference type="SMR" id="Q7WMK9"/>
<dbReference type="KEGG" id="bbr:BB1382"/>
<dbReference type="eggNOG" id="COG0126">
    <property type="taxonomic scope" value="Bacteria"/>
</dbReference>
<dbReference type="HOGENOM" id="CLU_025427_0_2_4"/>
<dbReference type="UniPathway" id="UPA00109">
    <property type="reaction ID" value="UER00185"/>
</dbReference>
<dbReference type="Proteomes" id="UP000001027">
    <property type="component" value="Chromosome"/>
</dbReference>
<dbReference type="GO" id="GO:0005829">
    <property type="term" value="C:cytosol"/>
    <property type="evidence" value="ECO:0007669"/>
    <property type="project" value="TreeGrafter"/>
</dbReference>
<dbReference type="GO" id="GO:0043531">
    <property type="term" value="F:ADP binding"/>
    <property type="evidence" value="ECO:0007669"/>
    <property type="project" value="TreeGrafter"/>
</dbReference>
<dbReference type="GO" id="GO:0005524">
    <property type="term" value="F:ATP binding"/>
    <property type="evidence" value="ECO:0007669"/>
    <property type="project" value="UniProtKB-KW"/>
</dbReference>
<dbReference type="GO" id="GO:0004618">
    <property type="term" value="F:phosphoglycerate kinase activity"/>
    <property type="evidence" value="ECO:0007669"/>
    <property type="project" value="UniProtKB-UniRule"/>
</dbReference>
<dbReference type="GO" id="GO:0006094">
    <property type="term" value="P:gluconeogenesis"/>
    <property type="evidence" value="ECO:0007669"/>
    <property type="project" value="TreeGrafter"/>
</dbReference>
<dbReference type="GO" id="GO:0006096">
    <property type="term" value="P:glycolytic process"/>
    <property type="evidence" value="ECO:0007669"/>
    <property type="project" value="UniProtKB-UniRule"/>
</dbReference>
<dbReference type="FunFam" id="3.40.50.1260:FF:000001">
    <property type="entry name" value="Phosphoglycerate kinase"/>
    <property type="match status" value="1"/>
</dbReference>
<dbReference type="FunFam" id="3.40.50.1260:FF:000002">
    <property type="entry name" value="Phosphoglycerate kinase"/>
    <property type="match status" value="1"/>
</dbReference>
<dbReference type="Gene3D" id="3.40.50.1260">
    <property type="entry name" value="Phosphoglycerate kinase, N-terminal domain"/>
    <property type="match status" value="2"/>
</dbReference>
<dbReference type="HAMAP" id="MF_00145">
    <property type="entry name" value="Phosphoglyc_kinase"/>
    <property type="match status" value="1"/>
</dbReference>
<dbReference type="InterPro" id="IPR001576">
    <property type="entry name" value="Phosphoglycerate_kinase"/>
</dbReference>
<dbReference type="InterPro" id="IPR015911">
    <property type="entry name" value="Phosphoglycerate_kinase_CS"/>
</dbReference>
<dbReference type="InterPro" id="IPR015824">
    <property type="entry name" value="Phosphoglycerate_kinase_N"/>
</dbReference>
<dbReference type="InterPro" id="IPR036043">
    <property type="entry name" value="Phosphoglycerate_kinase_sf"/>
</dbReference>
<dbReference type="PANTHER" id="PTHR11406">
    <property type="entry name" value="PHOSPHOGLYCERATE KINASE"/>
    <property type="match status" value="1"/>
</dbReference>
<dbReference type="PANTHER" id="PTHR11406:SF23">
    <property type="entry name" value="PHOSPHOGLYCERATE KINASE 1, CHLOROPLASTIC-RELATED"/>
    <property type="match status" value="1"/>
</dbReference>
<dbReference type="Pfam" id="PF00162">
    <property type="entry name" value="PGK"/>
    <property type="match status" value="1"/>
</dbReference>
<dbReference type="PIRSF" id="PIRSF000724">
    <property type="entry name" value="Pgk"/>
    <property type="match status" value="1"/>
</dbReference>
<dbReference type="PRINTS" id="PR00477">
    <property type="entry name" value="PHGLYCKINASE"/>
</dbReference>
<dbReference type="SUPFAM" id="SSF53748">
    <property type="entry name" value="Phosphoglycerate kinase"/>
    <property type="match status" value="1"/>
</dbReference>
<dbReference type="PROSITE" id="PS00111">
    <property type="entry name" value="PGLYCERATE_KINASE"/>
    <property type="match status" value="1"/>
</dbReference>
<protein>
    <recommendedName>
        <fullName evidence="1">Phosphoglycerate kinase</fullName>
        <ecNumber evidence="1">2.7.2.3</ecNumber>
    </recommendedName>
</protein>
<organism>
    <name type="scientific">Bordetella bronchiseptica (strain ATCC BAA-588 / NCTC 13252 / RB50)</name>
    <name type="common">Alcaligenes bronchisepticus</name>
    <dbReference type="NCBI Taxonomy" id="257310"/>
    <lineage>
        <taxon>Bacteria</taxon>
        <taxon>Pseudomonadati</taxon>
        <taxon>Pseudomonadota</taxon>
        <taxon>Betaproteobacteria</taxon>
        <taxon>Burkholderiales</taxon>
        <taxon>Alcaligenaceae</taxon>
        <taxon>Bordetella</taxon>
    </lineage>
</organism>
<name>PGK_BORBR</name>
<comment type="catalytic activity">
    <reaction evidence="1">
        <text>(2R)-3-phosphoglycerate + ATP = (2R)-3-phospho-glyceroyl phosphate + ADP</text>
        <dbReference type="Rhea" id="RHEA:14801"/>
        <dbReference type="ChEBI" id="CHEBI:30616"/>
        <dbReference type="ChEBI" id="CHEBI:57604"/>
        <dbReference type="ChEBI" id="CHEBI:58272"/>
        <dbReference type="ChEBI" id="CHEBI:456216"/>
        <dbReference type="EC" id="2.7.2.3"/>
    </reaction>
</comment>
<comment type="pathway">
    <text evidence="1">Carbohydrate degradation; glycolysis; pyruvate from D-glyceraldehyde 3-phosphate: step 2/5.</text>
</comment>
<comment type="subunit">
    <text evidence="1">Monomer.</text>
</comment>
<comment type="subcellular location">
    <subcellularLocation>
        <location evidence="1">Cytoplasm</location>
    </subcellularLocation>
</comment>
<comment type="similarity">
    <text evidence="1">Belongs to the phosphoglycerate kinase family.</text>
</comment>
<reference key="1">
    <citation type="journal article" date="2003" name="Nat. Genet.">
        <title>Comparative analysis of the genome sequences of Bordetella pertussis, Bordetella parapertussis and Bordetella bronchiseptica.</title>
        <authorList>
            <person name="Parkhill J."/>
            <person name="Sebaihia M."/>
            <person name="Preston A."/>
            <person name="Murphy L.D."/>
            <person name="Thomson N.R."/>
            <person name="Harris D.E."/>
            <person name="Holden M.T.G."/>
            <person name="Churcher C.M."/>
            <person name="Bentley S.D."/>
            <person name="Mungall K.L."/>
            <person name="Cerdeno-Tarraga A.-M."/>
            <person name="Temple L."/>
            <person name="James K.D."/>
            <person name="Harris B."/>
            <person name="Quail M.A."/>
            <person name="Achtman M."/>
            <person name="Atkin R."/>
            <person name="Baker S."/>
            <person name="Basham D."/>
            <person name="Bason N."/>
            <person name="Cherevach I."/>
            <person name="Chillingworth T."/>
            <person name="Collins M."/>
            <person name="Cronin A."/>
            <person name="Davis P."/>
            <person name="Doggett J."/>
            <person name="Feltwell T."/>
            <person name="Goble A."/>
            <person name="Hamlin N."/>
            <person name="Hauser H."/>
            <person name="Holroyd S."/>
            <person name="Jagels K."/>
            <person name="Leather S."/>
            <person name="Moule S."/>
            <person name="Norberczak H."/>
            <person name="O'Neil S."/>
            <person name="Ormond D."/>
            <person name="Price C."/>
            <person name="Rabbinowitsch E."/>
            <person name="Rutter S."/>
            <person name="Sanders M."/>
            <person name="Saunders D."/>
            <person name="Seeger K."/>
            <person name="Sharp S."/>
            <person name="Simmonds M."/>
            <person name="Skelton J."/>
            <person name="Squares R."/>
            <person name="Squares S."/>
            <person name="Stevens K."/>
            <person name="Unwin L."/>
            <person name="Whitehead S."/>
            <person name="Barrell B.G."/>
            <person name="Maskell D.J."/>
        </authorList>
    </citation>
    <scope>NUCLEOTIDE SEQUENCE [LARGE SCALE GENOMIC DNA]</scope>
    <source>
        <strain>ATCC BAA-588 / NCTC 13252 / RB50</strain>
    </source>
</reference>
<evidence type="ECO:0000255" key="1">
    <source>
        <dbReference type="HAMAP-Rule" id="MF_00145"/>
    </source>
</evidence>